<name>METK_BURA4</name>
<evidence type="ECO:0000255" key="1">
    <source>
        <dbReference type="HAMAP-Rule" id="MF_00086"/>
    </source>
</evidence>
<reference key="1">
    <citation type="submission" date="2008-04" db="EMBL/GenBank/DDBJ databases">
        <title>Complete sequence of chromosome 1 of Burkholderia ambifaria MC40-6.</title>
        <authorList>
            <person name="Copeland A."/>
            <person name="Lucas S."/>
            <person name="Lapidus A."/>
            <person name="Glavina del Rio T."/>
            <person name="Dalin E."/>
            <person name="Tice H."/>
            <person name="Pitluck S."/>
            <person name="Chain P."/>
            <person name="Malfatti S."/>
            <person name="Shin M."/>
            <person name="Vergez L."/>
            <person name="Lang D."/>
            <person name="Schmutz J."/>
            <person name="Larimer F."/>
            <person name="Land M."/>
            <person name="Hauser L."/>
            <person name="Kyrpides N."/>
            <person name="Lykidis A."/>
            <person name="Ramette A."/>
            <person name="Konstantinidis K."/>
            <person name="Tiedje J."/>
            <person name="Richardson P."/>
        </authorList>
    </citation>
    <scope>NUCLEOTIDE SEQUENCE [LARGE SCALE GENOMIC DNA]</scope>
    <source>
        <strain>MC40-6</strain>
    </source>
</reference>
<gene>
    <name evidence="1" type="primary">metK</name>
    <name type="ordered locus">BamMC406_2992</name>
</gene>
<keyword id="KW-0067">ATP-binding</keyword>
<keyword id="KW-0963">Cytoplasm</keyword>
<keyword id="KW-0460">Magnesium</keyword>
<keyword id="KW-0479">Metal-binding</keyword>
<keyword id="KW-0547">Nucleotide-binding</keyword>
<keyword id="KW-0554">One-carbon metabolism</keyword>
<keyword id="KW-0630">Potassium</keyword>
<keyword id="KW-0808">Transferase</keyword>
<organism>
    <name type="scientific">Burkholderia ambifaria (strain MC40-6)</name>
    <dbReference type="NCBI Taxonomy" id="398577"/>
    <lineage>
        <taxon>Bacteria</taxon>
        <taxon>Pseudomonadati</taxon>
        <taxon>Pseudomonadota</taxon>
        <taxon>Betaproteobacteria</taxon>
        <taxon>Burkholderiales</taxon>
        <taxon>Burkholderiaceae</taxon>
        <taxon>Burkholderia</taxon>
        <taxon>Burkholderia cepacia complex</taxon>
    </lineage>
</organism>
<comment type="function">
    <text evidence="1">Catalyzes the formation of S-adenosylmethionine (AdoMet) from methionine and ATP. The overall synthetic reaction is composed of two sequential steps, AdoMet formation and the subsequent tripolyphosphate hydrolysis which occurs prior to release of AdoMet from the enzyme.</text>
</comment>
<comment type="catalytic activity">
    <reaction evidence="1">
        <text>L-methionine + ATP + H2O = S-adenosyl-L-methionine + phosphate + diphosphate</text>
        <dbReference type="Rhea" id="RHEA:21080"/>
        <dbReference type="ChEBI" id="CHEBI:15377"/>
        <dbReference type="ChEBI" id="CHEBI:30616"/>
        <dbReference type="ChEBI" id="CHEBI:33019"/>
        <dbReference type="ChEBI" id="CHEBI:43474"/>
        <dbReference type="ChEBI" id="CHEBI:57844"/>
        <dbReference type="ChEBI" id="CHEBI:59789"/>
        <dbReference type="EC" id="2.5.1.6"/>
    </reaction>
</comment>
<comment type="cofactor">
    <cofactor evidence="1">
        <name>Mg(2+)</name>
        <dbReference type="ChEBI" id="CHEBI:18420"/>
    </cofactor>
    <text evidence="1">Binds 2 divalent ions per subunit.</text>
</comment>
<comment type="cofactor">
    <cofactor evidence="1">
        <name>K(+)</name>
        <dbReference type="ChEBI" id="CHEBI:29103"/>
    </cofactor>
    <text evidence="1">Binds 1 potassium ion per subunit.</text>
</comment>
<comment type="pathway">
    <text evidence="1">Amino-acid biosynthesis; S-adenosyl-L-methionine biosynthesis; S-adenosyl-L-methionine from L-methionine: step 1/1.</text>
</comment>
<comment type="subunit">
    <text evidence="1">Homotetramer; dimer of dimers.</text>
</comment>
<comment type="subcellular location">
    <subcellularLocation>
        <location evidence="1">Cytoplasm</location>
    </subcellularLocation>
</comment>
<comment type="similarity">
    <text evidence="1">Belongs to the AdoMet synthase family.</text>
</comment>
<protein>
    <recommendedName>
        <fullName evidence="1">S-adenosylmethionine synthase</fullName>
        <shortName evidence="1">AdoMet synthase</shortName>
        <ecNumber evidence="1">2.5.1.6</ecNumber>
    </recommendedName>
    <alternativeName>
        <fullName evidence="1">MAT</fullName>
    </alternativeName>
    <alternativeName>
        <fullName evidence="1">Methionine adenosyltransferase</fullName>
    </alternativeName>
</protein>
<dbReference type="EC" id="2.5.1.6" evidence="1"/>
<dbReference type="EMBL" id="CP001025">
    <property type="protein sequence ID" value="ACB65468.1"/>
    <property type="molecule type" value="Genomic_DNA"/>
</dbReference>
<dbReference type="RefSeq" id="WP_006753004.1">
    <property type="nucleotide sequence ID" value="NC_010551.1"/>
</dbReference>
<dbReference type="SMR" id="B1YPQ4"/>
<dbReference type="GeneID" id="93084674"/>
<dbReference type="KEGG" id="bac:BamMC406_2992"/>
<dbReference type="HOGENOM" id="CLU_041802_1_1_4"/>
<dbReference type="OrthoDB" id="9801686at2"/>
<dbReference type="UniPathway" id="UPA00315">
    <property type="reaction ID" value="UER00080"/>
</dbReference>
<dbReference type="Proteomes" id="UP000001680">
    <property type="component" value="Chromosome 1"/>
</dbReference>
<dbReference type="GO" id="GO:0005737">
    <property type="term" value="C:cytoplasm"/>
    <property type="evidence" value="ECO:0007669"/>
    <property type="project" value="UniProtKB-SubCell"/>
</dbReference>
<dbReference type="GO" id="GO:0005524">
    <property type="term" value="F:ATP binding"/>
    <property type="evidence" value="ECO:0007669"/>
    <property type="project" value="UniProtKB-UniRule"/>
</dbReference>
<dbReference type="GO" id="GO:0000287">
    <property type="term" value="F:magnesium ion binding"/>
    <property type="evidence" value="ECO:0007669"/>
    <property type="project" value="UniProtKB-UniRule"/>
</dbReference>
<dbReference type="GO" id="GO:0004478">
    <property type="term" value="F:methionine adenosyltransferase activity"/>
    <property type="evidence" value="ECO:0007669"/>
    <property type="project" value="UniProtKB-UniRule"/>
</dbReference>
<dbReference type="GO" id="GO:0006730">
    <property type="term" value="P:one-carbon metabolic process"/>
    <property type="evidence" value="ECO:0007669"/>
    <property type="project" value="UniProtKB-KW"/>
</dbReference>
<dbReference type="GO" id="GO:0006556">
    <property type="term" value="P:S-adenosylmethionine biosynthetic process"/>
    <property type="evidence" value="ECO:0007669"/>
    <property type="project" value="UniProtKB-UniRule"/>
</dbReference>
<dbReference type="CDD" id="cd18079">
    <property type="entry name" value="S-AdoMet_synt"/>
    <property type="match status" value="1"/>
</dbReference>
<dbReference type="FunFam" id="3.30.300.10:FF:000003">
    <property type="entry name" value="S-adenosylmethionine synthase"/>
    <property type="match status" value="1"/>
</dbReference>
<dbReference type="FunFam" id="3.30.300.10:FF:000004">
    <property type="entry name" value="S-adenosylmethionine synthase"/>
    <property type="match status" value="1"/>
</dbReference>
<dbReference type="Gene3D" id="3.30.300.10">
    <property type="match status" value="3"/>
</dbReference>
<dbReference type="HAMAP" id="MF_00086">
    <property type="entry name" value="S_AdoMet_synth1"/>
    <property type="match status" value="1"/>
</dbReference>
<dbReference type="InterPro" id="IPR022631">
    <property type="entry name" value="ADOMET_SYNTHASE_CS"/>
</dbReference>
<dbReference type="InterPro" id="IPR022630">
    <property type="entry name" value="S-AdoMet_synt_C"/>
</dbReference>
<dbReference type="InterPro" id="IPR022629">
    <property type="entry name" value="S-AdoMet_synt_central"/>
</dbReference>
<dbReference type="InterPro" id="IPR022628">
    <property type="entry name" value="S-AdoMet_synt_N"/>
</dbReference>
<dbReference type="InterPro" id="IPR002133">
    <property type="entry name" value="S-AdoMet_synthetase"/>
</dbReference>
<dbReference type="InterPro" id="IPR022636">
    <property type="entry name" value="S-AdoMet_synthetase_sfam"/>
</dbReference>
<dbReference type="NCBIfam" id="TIGR01034">
    <property type="entry name" value="metK"/>
    <property type="match status" value="1"/>
</dbReference>
<dbReference type="PANTHER" id="PTHR11964">
    <property type="entry name" value="S-ADENOSYLMETHIONINE SYNTHETASE"/>
    <property type="match status" value="1"/>
</dbReference>
<dbReference type="Pfam" id="PF02773">
    <property type="entry name" value="S-AdoMet_synt_C"/>
    <property type="match status" value="1"/>
</dbReference>
<dbReference type="Pfam" id="PF02772">
    <property type="entry name" value="S-AdoMet_synt_M"/>
    <property type="match status" value="1"/>
</dbReference>
<dbReference type="Pfam" id="PF00438">
    <property type="entry name" value="S-AdoMet_synt_N"/>
    <property type="match status" value="1"/>
</dbReference>
<dbReference type="PIRSF" id="PIRSF000497">
    <property type="entry name" value="MAT"/>
    <property type="match status" value="1"/>
</dbReference>
<dbReference type="SUPFAM" id="SSF55973">
    <property type="entry name" value="S-adenosylmethionine synthetase"/>
    <property type="match status" value="3"/>
</dbReference>
<dbReference type="PROSITE" id="PS00376">
    <property type="entry name" value="ADOMET_SYNTHASE_1"/>
    <property type="match status" value="1"/>
</dbReference>
<dbReference type="PROSITE" id="PS00377">
    <property type="entry name" value="ADOMET_SYNTHASE_2"/>
    <property type="match status" value="1"/>
</dbReference>
<accession>B1YPQ4</accession>
<sequence length="395" mass="42719">MANDYLFTSESVSEGHPDKVADQISDAILDAILEQDKYSRVAAETLCNTGLVVLAGEITTTANIDYIQIARDTIKRIGYDNTDYGIDYKGCAVLVAYDKQSPDIAQGVDRAHDDNLDQGAGDQGLMFGYACDETPELMPLPIYLSHRLVERQASLRRDGRLPWLRPDAKSQVTVRYVDGRPDSIDTVVLSTQHAPDIELPALREAVIEEIIKPTLPADLIKGDIKFLVNPTGRFVIGGPQGDCGLTGRKIIVDTYGGAAPHGGGAFSGKDPSKVDRSAAYAGRYVAKNIVAAGLASRALIQVSYAIGVAEPTSVMVNTFGTGRVSDAVITKLVREHFDLRPKGIIKMLDLLRPIYEKTAAYGHFGREEPEFSWEATDKALVLAEAAGVEPTARVA</sequence>
<proteinExistence type="inferred from homology"/>
<feature type="chain" id="PRO_1000093028" description="S-adenosylmethionine synthase">
    <location>
        <begin position="1"/>
        <end position="395"/>
    </location>
</feature>
<feature type="region of interest" description="Flexible loop" evidence="1">
    <location>
        <begin position="100"/>
        <end position="110"/>
    </location>
</feature>
<feature type="binding site" description="in other chain" evidence="1">
    <location>
        <position position="16"/>
    </location>
    <ligand>
        <name>ATP</name>
        <dbReference type="ChEBI" id="CHEBI:30616"/>
        <note>ligand shared between two neighboring subunits</note>
    </ligand>
</feature>
<feature type="binding site" evidence="1">
    <location>
        <position position="18"/>
    </location>
    <ligand>
        <name>Mg(2+)</name>
        <dbReference type="ChEBI" id="CHEBI:18420"/>
    </ligand>
</feature>
<feature type="binding site" evidence="1">
    <location>
        <position position="44"/>
    </location>
    <ligand>
        <name>K(+)</name>
        <dbReference type="ChEBI" id="CHEBI:29103"/>
    </ligand>
</feature>
<feature type="binding site" description="in other chain" evidence="1">
    <location>
        <position position="57"/>
    </location>
    <ligand>
        <name>L-methionine</name>
        <dbReference type="ChEBI" id="CHEBI:57844"/>
        <note>ligand shared between two neighboring subunits</note>
    </ligand>
</feature>
<feature type="binding site" description="in other chain" evidence="1">
    <location>
        <position position="100"/>
    </location>
    <ligand>
        <name>L-methionine</name>
        <dbReference type="ChEBI" id="CHEBI:57844"/>
        <note>ligand shared between two neighboring subunits</note>
    </ligand>
</feature>
<feature type="binding site" description="in other chain" evidence="1">
    <location>
        <begin position="167"/>
        <end position="169"/>
    </location>
    <ligand>
        <name>ATP</name>
        <dbReference type="ChEBI" id="CHEBI:30616"/>
        <note>ligand shared between two neighboring subunits</note>
    </ligand>
</feature>
<feature type="binding site" description="in other chain" evidence="1">
    <location>
        <begin position="233"/>
        <end position="234"/>
    </location>
    <ligand>
        <name>ATP</name>
        <dbReference type="ChEBI" id="CHEBI:30616"/>
        <note>ligand shared between two neighboring subunits</note>
    </ligand>
</feature>
<feature type="binding site" evidence="1">
    <location>
        <position position="242"/>
    </location>
    <ligand>
        <name>ATP</name>
        <dbReference type="ChEBI" id="CHEBI:30616"/>
        <note>ligand shared between two neighboring subunits</note>
    </ligand>
</feature>
<feature type="binding site" evidence="1">
    <location>
        <position position="242"/>
    </location>
    <ligand>
        <name>L-methionine</name>
        <dbReference type="ChEBI" id="CHEBI:57844"/>
        <note>ligand shared between two neighboring subunits</note>
    </ligand>
</feature>
<feature type="binding site" description="in other chain" evidence="1">
    <location>
        <begin position="248"/>
        <end position="249"/>
    </location>
    <ligand>
        <name>ATP</name>
        <dbReference type="ChEBI" id="CHEBI:30616"/>
        <note>ligand shared between two neighboring subunits</note>
    </ligand>
</feature>
<feature type="binding site" evidence="1">
    <location>
        <position position="265"/>
    </location>
    <ligand>
        <name>ATP</name>
        <dbReference type="ChEBI" id="CHEBI:30616"/>
        <note>ligand shared between two neighboring subunits</note>
    </ligand>
</feature>
<feature type="binding site" evidence="1">
    <location>
        <position position="269"/>
    </location>
    <ligand>
        <name>ATP</name>
        <dbReference type="ChEBI" id="CHEBI:30616"/>
        <note>ligand shared between two neighboring subunits</note>
    </ligand>
</feature>
<feature type="binding site" description="in other chain" evidence="1">
    <location>
        <position position="273"/>
    </location>
    <ligand>
        <name>L-methionine</name>
        <dbReference type="ChEBI" id="CHEBI:57844"/>
        <note>ligand shared between two neighboring subunits</note>
    </ligand>
</feature>